<evidence type="ECO:0000250" key="1">
    <source>
        <dbReference type="UniProtKB" id="P49959"/>
    </source>
</evidence>
<evidence type="ECO:0000250" key="2">
    <source>
        <dbReference type="UniProtKB" id="Q61216"/>
    </source>
</evidence>
<evidence type="ECO:0000256" key="3">
    <source>
        <dbReference type="SAM" id="MobiDB-lite"/>
    </source>
</evidence>
<evidence type="ECO:0000305" key="4"/>
<evidence type="ECO:0007744" key="5">
    <source>
    </source>
</evidence>
<name>MRE11_RAT</name>
<accession>Q9JIM0</accession>
<reference key="1">
    <citation type="journal article" date="2000" name="Nucleic Acids Res.">
        <title>The MRE11-NBS1-RAD50 pathway is perturbed in SV40 large T antigen-immortalized AT-1, AT-2 and HL-1 cardiomyocytes.</title>
        <authorList>
            <person name="Lanson N.A. Jr."/>
            <person name="Egeland D.B."/>
            <person name="Royals B.A."/>
            <person name="Claycomb W.C."/>
        </authorList>
    </citation>
    <scope>NUCLEOTIDE SEQUENCE [MRNA]</scope>
</reference>
<reference key="2">
    <citation type="journal article" date="2012" name="Nat. Commun.">
        <title>Quantitative maps of protein phosphorylation sites across 14 different rat organs and tissues.</title>
        <authorList>
            <person name="Lundby A."/>
            <person name="Secher A."/>
            <person name="Lage K."/>
            <person name="Nordsborg N.B."/>
            <person name="Dmytriyev A."/>
            <person name="Lundby C."/>
            <person name="Olsen J.V."/>
        </authorList>
    </citation>
    <scope>PHOSPHORYLATION [LARGE SCALE ANALYSIS] AT SER-686</scope>
    <scope>IDENTIFICATION BY MASS SPECTROMETRY [LARGE SCALE ANALYSIS]</scope>
</reference>
<comment type="function">
    <text evidence="1 2">Core component of the MRN complex, which plays a central role in double-strand break (DSB) repair, DNA recombination, maintenance of telomere integrity and meiosis. The MRN complex is involved in the repair of DNA double-strand breaks (DSBs) via homologous recombination (HR), an error-free mechanism which primarily occurs during S and G2 phases. The complex (1) mediates the end resection of damaged DNA, which generates proper single-stranded DNA, a key initial steps in HR, and is (2) required for the recruitment of other repair factors and efficient activation of ATM and ATR upon DNA damage. Within the MRN complex, MRE11 possesses both single-strand endonuclease activity and double-strand-specific 3'-5' exonuclease activity. After DSBs, MRE11 is loaded onto DSBs sites and cleaves DNA by cooperating with RBBP8/CtIP to initiate end resection. MRE11 first endonucleolytically cleaves the 5' strand at DNA DSB ends to prevent non-homologous end joining (NHEJ) and licence HR. It then generates a single-stranded DNA gap via 3' to 5' exonucleolytic degradation to create entry sites for EXO1- and DNA2-mediated 5' to 3' long-range resection, which is required for single-strand invasion and recombination. RBBP8/CtIP specifically promotes the endonuclease activity of MRE11 to clear protein-DNA adducts and generate clean double-strand break ends. MRE11 endonuclease activity is also enhanced by AGER/RAGE. The MRN complex is also required for DNA damage signaling via activation of the ATM and ATR kinases: the nuclease activity of MRE11 is not required to activate ATM and ATR. The MRN complex is also required for the processing of R-loops (By similarity). The MRN complex is involved in the activation of the cGAS-STING pathway induced by DNA damage during tumorigenesis: the MRN complex acts by displacing CGAS from nucleosome sequestration, thereby activating it (By similarity). In telomeres the MRN complex may modulate t-loop formation (By similarity).</text>
</comment>
<comment type="cofactor">
    <cofactor evidence="1">
        <name>Mn(2+)</name>
        <dbReference type="ChEBI" id="CHEBI:29035"/>
    </cofactor>
</comment>
<comment type="activity regulation">
    <text evidence="1">Interaction with SAMHD1 stimulates the double-strand-specific 3'-5' exonuclease activity. RBBP8/CtIP specifically promotes the endonuclease activity to clear protein-DNA adducts and generate clean double-strand break ends. DYNLL1-binding inhibits the activity of MRE11. MRE11 activity is inhibited by C1QBP: in absence of DNA damage, C1QBP interacts with unphosphorylated MRE11, preventing formation and activity of the MRN complex.</text>
</comment>
<comment type="subunit">
    <text evidence="1 2">Component of the MRN complex composed of two heterodimers RAD50 and MRE11 associated with a single NBN. The MRN complexes dimerize on DNA to form joined MRN-MRN oligomers required for DNA double-strand break repair. As part of the MRN complex, interacts with MCM9; the interaction recruits the complex to DNA repair sites. Component of the BASC complex, at least composed of BRCA1, MSH2, MSH6, MLH1, ATM, BLM, RAD50, MRE11 and NBN. Found in a complex with TERF2. Interacts with DCLRE1C/Artemis and DCLRE1B/Apollo. Interacts with ATF2. Interacts with EXD2. Interacts with MRNIP. Interacts with SAMHD1; leading to stimulate 3'-5' exonuclease activity. Interacts (when ubiquitinated) with UBQLN4 (via its UBA domain) (By similarity). Interacts with CYREN (via XLF motif) (By similarity). Interacts with GFI1; promoting methylation by PRMT1. Interacts with DYNLL1; inhibiting the activity of MRE11. Interacts with C1QBP and RAD50; interaction takes place in absence of DNA damage to form the MRC (MRE11-RAD50-C1QBP) complex that inhibits the activity of MRE11 (By similarity). Interacts with AGER/RAGE; AGER is recruited to DNA double-strand break sites where it enhances MRE11 endonuclease activity to promote DNA repair (By similarity).</text>
</comment>
<comment type="subcellular location">
    <subcellularLocation>
        <location evidence="1">Nucleus</location>
    </subcellularLocation>
    <subcellularLocation>
        <location evidence="1">Chromosome</location>
    </subcellularLocation>
    <subcellularLocation>
        <location evidence="1">Chromosome</location>
        <location evidence="1">Telomere</location>
    </subcellularLocation>
    <text evidence="1">Localizes to DNA double-strand breaks (DSBs).</text>
</comment>
<comment type="PTM">
    <text evidence="1">Phosphorylated by ATM at Ser-674 and Ser-676 in response to DNA damage, promoting MRE11 activity: phosphorylation activates MRE11 by preventing the interaction between MRE11 and the C1QBP inhibitor (By similarity). Phosphorylation at Ser-648 by PLK1 primes for phosphorylation at Ser-686 by CK2, inhibiting recruitment of the MRN complex to DNA damage sites (By similarity).</text>
</comment>
<comment type="PTM">
    <text evidence="1">Asymmetric dimethylation by PRMT1 promotes MRE11 exonuclease activity.</text>
</comment>
<comment type="PTM">
    <text evidence="1">Lactylation at Lys-671 by CREBBP/CBP in response to DNA damage promotes DNA binding and MRE11 activity.</text>
</comment>
<comment type="PTM">
    <text evidence="1">Acetylated on lysine residues by KAT2A /GCN5.</text>
</comment>
<comment type="PTM">
    <text evidence="1">Ubiquitinated following DNA damage. Ubiquitination triggers interaction with UBQLN4, leading to MRE11 removal from chromatin and degradation by the proteasome. Ubiquitinated at Lys-339 and Lys-481 by RNF126 via 'Lys-27'- and 'Lys-29'-linked polyubiquitin chains, promoting the exonuclease activity of MRE11.</text>
</comment>
<comment type="PTM">
    <text evidence="1">SUMOylated by PIAS1, stabilizing MRE11 on chromatin during end resection. DeSUMOylated by SENP3 following removal from DNA double-strand breaks (DSBs).</text>
</comment>
<comment type="PTM">
    <text evidence="1">Ufmylation at Lys-282 promotes MRE11 activity and is required for activation of the ATM and ATR kinases by the MRN complex.</text>
</comment>
<comment type="similarity">
    <text evidence="4">Belongs to the MRE11/RAD32 family.</text>
</comment>
<protein>
    <recommendedName>
        <fullName>Double-strand break repair protein MRE11</fullName>
        <ecNumber evidence="1">3.1.-.-</ecNumber>
    </recommendedName>
    <alternativeName>
        <fullName>Double-strand break repair protein MRE11A</fullName>
    </alternativeName>
    <alternativeName>
        <fullName>Meiotic recombination 11 homolog 1</fullName>
        <shortName>MRE11 homolog 1</shortName>
    </alternativeName>
    <alternativeName>
        <fullName>Meiotic recombination 11 homolog A</fullName>
        <shortName>MRE11 homolog A</shortName>
    </alternativeName>
</protein>
<keyword id="KW-0007">Acetylation</keyword>
<keyword id="KW-0158">Chromosome</keyword>
<keyword id="KW-0227">DNA damage</keyword>
<keyword id="KW-0234">DNA repair</keyword>
<keyword id="KW-0255">Endonuclease</keyword>
<keyword id="KW-0269">Exonuclease</keyword>
<keyword id="KW-0378">Hydrolase</keyword>
<keyword id="KW-1017">Isopeptide bond</keyword>
<keyword id="KW-0464">Manganese</keyword>
<keyword id="KW-0469">Meiosis</keyword>
<keyword id="KW-0479">Metal-binding</keyword>
<keyword id="KW-0488">Methylation</keyword>
<keyword id="KW-0540">Nuclease</keyword>
<keyword id="KW-0539">Nucleus</keyword>
<keyword id="KW-0597">Phosphoprotein</keyword>
<keyword id="KW-1185">Reference proteome</keyword>
<keyword id="KW-0779">Telomere</keyword>
<keyword id="KW-0832">Ubl conjugation</keyword>
<feature type="initiator methionine" description="Removed" evidence="1">
    <location>
        <position position="1"/>
    </location>
</feature>
<feature type="chain" id="PRO_0000138675" description="Double-strand break repair protein MRE11">
    <location>
        <begin position="2"/>
        <end position="706"/>
    </location>
</feature>
<feature type="region of interest" description="Interaction with NBN" evidence="1">
    <location>
        <begin position="87"/>
        <end position="117"/>
    </location>
</feature>
<feature type="region of interest" description="Disordered" evidence="3">
    <location>
        <begin position="505"/>
        <end position="706"/>
    </location>
</feature>
<feature type="short sequence motif" description="GAR" evidence="1">
    <location>
        <begin position="570"/>
        <end position="594"/>
    </location>
</feature>
<feature type="compositionally biased region" description="Basic and acidic residues" evidence="3">
    <location>
        <begin position="505"/>
        <end position="514"/>
    </location>
</feature>
<feature type="compositionally biased region" description="Low complexity" evidence="3">
    <location>
        <begin position="537"/>
        <end position="549"/>
    </location>
</feature>
<feature type="compositionally biased region" description="Basic residues" evidence="3">
    <location>
        <begin position="569"/>
        <end position="579"/>
    </location>
</feature>
<feature type="compositionally biased region" description="Polar residues" evidence="3">
    <location>
        <begin position="603"/>
        <end position="617"/>
    </location>
</feature>
<feature type="compositionally biased region" description="Polar residues" evidence="3">
    <location>
        <begin position="625"/>
        <end position="641"/>
    </location>
</feature>
<feature type="compositionally biased region" description="Acidic residues" evidence="3">
    <location>
        <begin position="643"/>
        <end position="653"/>
    </location>
</feature>
<feature type="compositionally biased region" description="Polar residues" evidence="3">
    <location>
        <begin position="654"/>
        <end position="679"/>
    </location>
</feature>
<feature type="compositionally biased region" description="Acidic residues" evidence="3">
    <location>
        <begin position="684"/>
        <end position="694"/>
    </location>
</feature>
<feature type="active site" description="Proton donor" evidence="2">
    <location>
        <position position="129"/>
    </location>
</feature>
<feature type="binding site" evidence="1">
    <location>
        <position position="20"/>
    </location>
    <ligand>
        <name>Mn(2+)</name>
        <dbReference type="ChEBI" id="CHEBI:29035"/>
        <label>1</label>
    </ligand>
</feature>
<feature type="binding site" evidence="1">
    <location>
        <position position="22"/>
    </location>
    <ligand>
        <name>Mn(2+)</name>
        <dbReference type="ChEBI" id="CHEBI:29035"/>
        <label>1</label>
    </ligand>
</feature>
<feature type="binding site" evidence="1">
    <location>
        <position position="60"/>
    </location>
    <ligand>
        <name>Mn(2+)</name>
        <dbReference type="ChEBI" id="CHEBI:29035"/>
        <label>1</label>
    </ligand>
</feature>
<feature type="binding site" evidence="1">
    <location>
        <position position="60"/>
    </location>
    <ligand>
        <name>Mn(2+)</name>
        <dbReference type="ChEBI" id="CHEBI:29035"/>
        <label>2</label>
    </ligand>
</feature>
<feature type="binding site" evidence="1">
    <location>
        <position position="128"/>
    </location>
    <ligand>
        <name>Mn(2+)</name>
        <dbReference type="ChEBI" id="CHEBI:29035"/>
        <label>2</label>
    </ligand>
</feature>
<feature type="binding site" evidence="1">
    <location>
        <position position="217"/>
    </location>
    <ligand>
        <name>Mn(2+)</name>
        <dbReference type="ChEBI" id="CHEBI:29035"/>
        <label>2</label>
    </ligand>
</feature>
<feature type="binding site" evidence="1">
    <location>
        <position position="245"/>
    </location>
    <ligand>
        <name>Mn(2+)</name>
        <dbReference type="ChEBI" id="CHEBI:29035"/>
        <label>2</label>
    </ligand>
</feature>
<feature type="binding site" evidence="1">
    <location>
        <position position="247"/>
    </location>
    <ligand>
        <name>Mn(2+)</name>
        <dbReference type="ChEBI" id="CHEBI:29035"/>
        <label>1</label>
    </ligand>
</feature>
<feature type="modified residue" description="N-acetylserine" evidence="1">
    <location>
        <position position="2"/>
    </location>
</feature>
<feature type="modified residue" description="Phosphoserine" evidence="2">
    <location>
        <position position="2"/>
    </location>
</feature>
<feature type="modified residue" description="Phosphoserine" evidence="1">
    <location>
        <position position="275"/>
    </location>
</feature>
<feature type="modified residue" description="Asymmetric dimethylarginine" evidence="1">
    <location>
        <position position="570"/>
    </location>
</feature>
<feature type="modified residue" description="Asymmetric dimethylarginine" evidence="1">
    <location>
        <position position="572"/>
    </location>
</feature>
<feature type="modified residue" description="Asymmetric dimethylarginine" evidence="1">
    <location>
        <position position="574"/>
    </location>
</feature>
<feature type="modified residue" description="Asymmetric dimethylarginine" evidence="1">
    <location>
        <position position="576"/>
    </location>
</feature>
<feature type="modified residue" description="Asymmetric dimethylarginine" evidence="1">
    <location>
        <position position="577"/>
    </location>
</feature>
<feature type="modified residue" description="Asymmetric dimethylarginine" evidence="1">
    <location>
        <position position="580"/>
    </location>
</feature>
<feature type="modified residue" description="Asymmetric dimethylarginine" evidence="1">
    <location>
        <position position="587"/>
    </location>
</feature>
<feature type="modified residue" description="Asymmetric dimethylarginine" evidence="1">
    <location>
        <position position="592"/>
    </location>
</feature>
<feature type="modified residue" description="Asymmetric dimethylarginine" evidence="1">
    <location>
        <position position="594"/>
    </location>
</feature>
<feature type="modified residue" description="Phosphoserine" evidence="1">
    <location>
        <position position="618"/>
    </location>
</feature>
<feature type="modified residue" description="Phosphoserine" evidence="2">
    <location>
        <position position="640"/>
    </location>
</feature>
<feature type="modified residue" description="Phosphoserine" evidence="1">
    <location>
        <position position="648"/>
    </location>
</feature>
<feature type="modified residue" description="N6-lactoyllysine" evidence="1">
    <location>
        <position position="671"/>
    </location>
</feature>
<feature type="modified residue" description="Phosphoserine" evidence="1">
    <location>
        <position position="674"/>
    </location>
</feature>
<feature type="modified residue" description="Phosphoserine" evidence="1">
    <location>
        <position position="676"/>
    </location>
</feature>
<feature type="modified residue" description="Phosphoserine" evidence="5">
    <location>
        <position position="686"/>
    </location>
</feature>
<feature type="modified residue" description="Phosphoserine" evidence="1">
    <location>
        <position position="699"/>
    </location>
</feature>
<feature type="cross-link" description="Glycyl lysine isopeptide (Lys-Gly) (interchain with G-Cter in UFM1)" evidence="1">
    <location>
        <position position="282"/>
    </location>
</feature>
<feature type="cross-link" description="Glycyl lysine isopeptide (Lys-Gly) (interchain with G-Cter in ubiquitin)" evidence="1">
    <location>
        <position position="339"/>
    </location>
</feature>
<feature type="cross-link" description="Glycyl lysine isopeptide (Lys-Gly) (interchain with G-Cter in SUMO)" evidence="1">
    <location>
        <position position="384"/>
    </location>
</feature>
<feature type="cross-link" description="Glycyl lysine isopeptide (Lys-Gly) (interchain with G-Cter in SUMO2)" evidence="1">
    <location>
        <position position="416"/>
    </location>
</feature>
<feature type="cross-link" description="Glycyl lysine isopeptide (Lys-Gly) (interchain with G-Cter in SUMO)" evidence="1">
    <location>
        <position position="468"/>
    </location>
</feature>
<feature type="cross-link" description="Glycyl lysine isopeptide (Lys-Gly) (interchain with G-Cter in ubiquitin)" evidence="1">
    <location>
        <position position="481"/>
    </location>
</feature>
<proteinExistence type="evidence at protein level"/>
<sequence length="706" mass="80122">MSPTDPLDDEDTFKILVATDIHLGFMEKDAVRGNDTFVTFDEILRLALENEVDFILLGGDLFHENKPSRKTLHSCLELLRKYCMGDRPVQFEIISDQSVNFGFSKFPWVNYRDGNLNISIPVFSIHGNHDDPTGADALCALDVLSCAGFVNHFGRSMSVEKVDISPVLLQKGSTKLALYGLGSIPDERLYRMFVNKKVTMLRPKEDENSWFNLFVIHQNRSKHGSTNFIPEQFLDDFIDLVIWGHEHECKIGPTRNEQQLFYVSQPGSSVVTALSPGETVKKHVGLLRVKGRKMNMQKLPLRTVRQFFMEDVVLANHPSLFNPDNPKVTQAIQSFCLEKIEEMLDSAERERLGNPQQPEKPLIRLRVDYSGGFEPFNVLRFSQKFVDRVANPKDVIHFFRHREQKGKTGEEINFGKLIIKPASEGTTLRVEDLVKQYFQTAEKNVQLSLLTERGMGEAVQEFVDKEEKDAIEELVKYQLEKTQRFLKERHIDALEDKIDEEVRRFRESRQRNTNEEDDEVREAMSRARALRSQSENAASAFSADDLSFDITEQTADDSDDSQSAVPSRGRGRGRGRRGGRGQSTAPRGGSQRGRDTGLGISTRGRSSKATASTSRNMSIIDAFRSTRQQPSRNVATKNYSETIEVDESDDDDSFPTSSRADQRWSGTAPSKRMSQSQTAKGVDFESDEDDDDDPFMSGSCPRRNRR</sequence>
<organism>
    <name type="scientific">Rattus norvegicus</name>
    <name type="common">Rat</name>
    <dbReference type="NCBI Taxonomy" id="10116"/>
    <lineage>
        <taxon>Eukaryota</taxon>
        <taxon>Metazoa</taxon>
        <taxon>Chordata</taxon>
        <taxon>Craniata</taxon>
        <taxon>Vertebrata</taxon>
        <taxon>Euteleostomi</taxon>
        <taxon>Mammalia</taxon>
        <taxon>Eutheria</taxon>
        <taxon>Euarchontoglires</taxon>
        <taxon>Glires</taxon>
        <taxon>Rodentia</taxon>
        <taxon>Myomorpha</taxon>
        <taxon>Muroidea</taxon>
        <taxon>Muridae</taxon>
        <taxon>Murinae</taxon>
        <taxon>Rattus</taxon>
    </lineage>
</organism>
<gene>
    <name type="primary">Mre11</name>
    <name type="synonym">Mre11a</name>
</gene>
<dbReference type="EC" id="3.1.-.-" evidence="1"/>
<dbReference type="EMBL" id="AF218574">
    <property type="protein sequence ID" value="AAF91227.1"/>
    <property type="molecule type" value="mRNA"/>
</dbReference>
<dbReference type="RefSeq" id="NP_071615.1">
    <property type="nucleotide sequence ID" value="NM_022279.1"/>
</dbReference>
<dbReference type="SMR" id="Q9JIM0"/>
<dbReference type="FunCoup" id="Q9JIM0">
    <property type="interactions" value="3117"/>
</dbReference>
<dbReference type="STRING" id="10116.ENSRNOP00000012940"/>
<dbReference type="iPTMnet" id="Q9JIM0"/>
<dbReference type="PhosphoSitePlus" id="Q9JIM0"/>
<dbReference type="jPOST" id="Q9JIM0"/>
<dbReference type="PaxDb" id="10116-ENSRNOP00000012940"/>
<dbReference type="GeneID" id="64046"/>
<dbReference type="KEGG" id="rno:64046"/>
<dbReference type="UCSC" id="RGD:69263">
    <property type="organism name" value="rat"/>
</dbReference>
<dbReference type="AGR" id="RGD:69263"/>
<dbReference type="CTD" id="4361"/>
<dbReference type="RGD" id="69263">
    <property type="gene designation" value="Mre11"/>
</dbReference>
<dbReference type="eggNOG" id="KOG2310">
    <property type="taxonomic scope" value="Eukaryota"/>
</dbReference>
<dbReference type="InParanoid" id="Q9JIM0"/>
<dbReference type="OrthoDB" id="30417at2759"/>
<dbReference type="PhylomeDB" id="Q9JIM0"/>
<dbReference type="Reactome" id="R-RNO-1834949">
    <property type="pathway name" value="Cytosolic sensors of pathogen-associated DNA"/>
</dbReference>
<dbReference type="Reactome" id="R-RNO-2559586">
    <property type="pathway name" value="DNA Damage/Telomere Stress Induced Senescence"/>
</dbReference>
<dbReference type="Reactome" id="R-RNO-5685938">
    <property type="pathway name" value="HDR through Single Strand Annealing (SSA)"/>
</dbReference>
<dbReference type="Reactome" id="R-RNO-5685939">
    <property type="pathway name" value="HDR through MMEJ (alt-NHEJ)"/>
</dbReference>
<dbReference type="Reactome" id="R-RNO-5685942">
    <property type="pathway name" value="HDR through Homologous Recombination (HRR)"/>
</dbReference>
<dbReference type="Reactome" id="R-RNO-5693548">
    <property type="pathway name" value="Sensing of DNA Double Strand Breaks"/>
</dbReference>
<dbReference type="Reactome" id="R-RNO-5693565">
    <property type="pathway name" value="Recruitment and ATM-mediated phosphorylation of repair and signaling proteins at DNA double strand breaks"/>
</dbReference>
<dbReference type="Reactome" id="R-RNO-5693568">
    <property type="pathway name" value="Resolution of D-loop Structures through Holliday Junction Intermediates"/>
</dbReference>
<dbReference type="Reactome" id="R-RNO-5693571">
    <property type="pathway name" value="Nonhomologous End-Joining (NHEJ)"/>
</dbReference>
<dbReference type="Reactome" id="R-RNO-5693579">
    <property type="pathway name" value="Homologous DNA Pairing and Strand Exchange"/>
</dbReference>
<dbReference type="Reactome" id="R-RNO-5693607">
    <property type="pathway name" value="Processing of DNA double-strand break ends"/>
</dbReference>
<dbReference type="Reactome" id="R-RNO-5693616">
    <property type="pathway name" value="Presynaptic phase of homologous DNA pairing and strand exchange"/>
</dbReference>
<dbReference type="Reactome" id="R-RNO-6804756">
    <property type="pathway name" value="Regulation of TP53 Activity through Phosphorylation"/>
</dbReference>
<dbReference type="Reactome" id="R-RNO-69473">
    <property type="pathway name" value="G2/M DNA damage checkpoint"/>
</dbReference>
<dbReference type="PRO" id="PR:Q9JIM0"/>
<dbReference type="Proteomes" id="UP000002494">
    <property type="component" value="Unplaced"/>
</dbReference>
<dbReference type="GO" id="GO:0070533">
    <property type="term" value="C:BRCA1-C complex"/>
    <property type="evidence" value="ECO:0000266"/>
    <property type="project" value="RGD"/>
</dbReference>
<dbReference type="GO" id="GO:0000785">
    <property type="term" value="C:chromatin"/>
    <property type="evidence" value="ECO:0000314"/>
    <property type="project" value="RGD"/>
</dbReference>
<dbReference type="GO" id="GO:0000781">
    <property type="term" value="C:chromosome, telomeric region"/>
    <property type="evidence" value="ECO:0000266"/>
    <property type="project" value="RGD"/>
</dbReference>
<dbReference type="GO" id="GO:0000794">
    <property type="term" value="C:condensed nuclear chromosome"/>
    <property type="evidence" value="ECO:0000314"/>
    <property type="project" value="RGD"/>
</dbReference>
<dbReference type="GO" id="GO:0005737">
    <property type="term" value="C:cytoplasm"/>
    <property type="evidence" value="ECO:0000266"/>
    <property type="project" value="RGD"/>
</dbReference>
<dbReference type="GO" id="GO:0030870">
    <property type="term" value="C:Mre11 complex"/>
    <property type="evidence" value="ECO:0000250"/>
    <property type="project" value="UniProtKB"/>
</dbReference>
<dbReference type="GO" id="GO:0005654">
    <property type="term" value="C:nucleoplasm"/>
    <property type="evidence" value="ECO:0000314"/>
    <property type="project" value="RGD"/>
</dbReference>
<dbReference type="GO" id="GO:0005634">
    <property type="term" value="C:nucleus"/>
    <property type="evidence" value="ECO:0000266"/>
    <property type="project" value="RGD"/>
</dbReference>
<dbReference type="GO" id="GO:0048471">
    <property type="term" value="C:perinuclear region of cytoplasm"/>
    <property type="evidence" value="ECO:0000314"/>
    <property type="project" value="RGD"/>
</dbReference>
<dbReference type="GO" id="GO:0016605">
    <property type="term" value="C:PML body"/>
    <property type="evidence" value="ECO:0000266"/>
    <property type="project" value="RGD"/>
</dbReference>
<dbReference type="GO" id="GO:0005657">
    <property type="term" value="C:replication fork"/>
    <property type="evidence" value="ECO:0000250"/>
    <property type="project" value="UniProtKB"/>
</dbReference>
<dbReference type="GO" id="GO:0035861">
    <property type="term" value="C:site of double-strand break"/>
    <property type="evidence" value="ECO:0000250"/>
    <property type="project" value="UniProtKB"/>
</dbReference>
<dbReference type="GO" id="GO:0008408">
    <property type="term" value="F:3'-5' exonuclease activity"/>
    <property type="evidence" value="ECO:0000250"/>
    <property type="project" value="UniProtKB"/>
</dbReference>
<dbReference type="GO" id="GO:0008296">
    <property type="term" value="F:3'-5'-DNA exonuclease activity"/>
    <property type="evidence" value="ECO:0000266"/>
    <property type="project" value="RGD"/>
</dbReference>
<dbReference type="GO" id="GO:0004520">
    <property type="term" value="F:DNA endonuclease activity"/>
    <property type="evidence" value="ECO:0000250"/>
    <property type="project" value="UniProtKB"/>
</dbReference>
<dbReference type="GO" id="GO:0042802">
    <property type="term" value="F:identical protein binding"/>
    <property type="evidence" value="ECO:0000266"/>
    <property type="project" value="RGD"/>
</dbReference>
<dbReference type="GO" id="GO:0030145">
    <property type="term" value="F:manganese ion binding"/>
    <property type="evidence" value="ECO:0007669"/>
    <property type="project" value="InterPro"/>
</dbReference>
<dbReference type="GO" id="GO:0004518">
    <property type="term" value="F:nuclease activity"/>
    <property type="evidence" value="ECO:0000266"/>
    <property type="project" value="RGD"/>
</dbReference>
<dbReference type="GO" id="GO:0000014">
    <property type="term" value="F:single-stranded DNA endodeoxyribonuclease activity"/>
    <property type="evidence" value="ECO:0000266"/>
    <property type="project" value="RGD"/>
</dbReference>
<dbReference type="GO" id="GO:0008283">
    <property type="term" value="P:cell population proliferation"/>
    <property type="evidence" value="ECO:0000266"/>
    <property type="project" value="RGD"/>
</dbReference>
<dbReference type="GO" id="GO:0051276">
    <property type="term" value="P:chromosome organization"/>
    <property type="evidence" value="ECO:0000266"/>
    <property type="project" value="RGD"/>
</dbReference>
<dbReference type="GO" id="GO:0006974">
    <property type="term" value="P:DNA damage response"/>
    <property type="evidence" value="ECO:0000250"/>
    <property type="project" value="UniProtKB"/>
</dbReference>
<dbReference type="GO" id="GO:0000729">
    <property type="term" value="P:DNA double-strand break processing"/>
    <property type="evidence" value="ECO:0000266"/>
    <property type="project" value="RGD"/>
</dbReference>
<dbReference type="GO" id="GO:0110025">
    <property type="term" value="P:DNA strand resection involved in replication fork processing"/>
    <property type="evidence" value="ECO:0000250"/>
    <property type="project" value="UniProtKB"/>
</dbReference>
<dbReference type="GO" id="GO:0006302">
    <property type="term" value="P:double-strand break repair"/>
    <property type="evidence" value="ECO:0000266"/>
    <property type="project" value="RGD"/>
</dbReference>
<dbReference type="GO" id="GO:0000724">
    <property type="term" value="P:double-strand break repair via homologous recombination"/>
    <property type="evidence" value="ECO:0000250"/>
    <property type="project" value="UniProtKB"/>
</dbReference>
<dbReference type="GO" id="GO:0006303">
    <property type="term" value="P:double-strand break repair via nonhomologous end joining"/>
    <property type="evidence" value="ECO:0000250"/>
    <property type="project" value="UniProtKB"/>
</dbReference>
<dbReference type="GO" id="GO:0007507">
    <property type="term" value="P:heart development"/>
    <property type="evidence" value="ECO:0000270"/>
    <property type="project" value="RGD"/>
</dbReference>
<dbReference type="GO" id="GO:0007129">
    <property type="term" value="P:homologous chromosome pairing at meiosis"/>
    <property type="evidence" value="ECO:0000266"/>
    <property type="project" value="RGD"/>
</dbReference>
<dbReference type="GO" id="GO:0046597">
    <property type="term" value="P:host-mediated suppression of symbiont invasion"/>
    <property type="evidence" value="ECO:0000315"/>
    <property type="project" value="RGD"/>
</dbReference>
<dbReference type="GO" id="GO:0042138">
    <property type="term" value="P:meiotic DNA double-strand break formation"/>
    <property type="evidence" value="ECO:0000318"/>
    <property type="project" value="GO_Central"/>
</dbReference>
<dbReference type="GO" id="GO:0097552">
    <property type="term" value="P:mitochondrial double-strand break repair via homologous recombination"/>
    <property type="evidence" value="ECO:0000318"/>
    <property type="project" value="GO_Central"/>
</dbReference>
<dbReference type="GO" id="GO:0007095">
    <property type="term" value="P:mitotic G2 DNA damage checkpoint signaling"/>
    <property type="evidence" value="ECO:0000266"/>
    <property type="project" value="RGD"/>
</dbReference>
<dbReference type="GO" id="GO:0031573">
    <property type="term" value="P:mitotic intra-S DNA damage checkpoint signaling"/>
    <property type="evidence" value="ECO:0000266"/>
    <property type="project" value="RGD"/>
</dbReference>
<dbReference type="GO" id="GO:0043066">
    <property type="term" value="P:negative regulation of apoptotic process"/>
    <property type="evidence" value="ECO:0000266"/>
    <property type="project" value="RGD"/>
</dbReference>
<dbReference type="GO" id="GO:2001033">
    <property type="term" value="P:negative regulation of double-strand break repair via nonhomologous end joining"/>
    <property type="evidence" value="ECO:0000250"/>
    <property type="project" value="UniProtKB"/>
</dbReference>
<dbReference type="GO" id="GO:2000781">
    <property type="term" value="P:positive regulation of double-strand break repair"/>
    <property type="evidence" value="ECO:0000266"/>
    <property type="project" value="RGD"/>
</dbReference>
<dbReference type="GO" id="GO:0032206">
    <property type="term" value="P:positive regulation of telomere maintenance"/>
    <property type="evidence" value="ECO:0000266"/>
    <property type="project" value="RGD"/>
</dbReference>
<dbReference type="GO" id="GO:0062176">
    <property type="term" value="P:R-loop processing"/>
    <property type="evidence" value="ECO:0000250"/>
    <property type="project" value="UniProtKB"/>
</dbReference>
<dbReference type="GO" id="GO:0007062">
    <property type="term" value="P:sister chromatid cohesion"/>
    <property type="evidence" value="ECO:0000266"/>
    <property type="project" value="RGD"/>
</dbReference>
<dbReference type="GO" id="GO:0000723">
    <property type="term" value="P:telomere maintenance"/>
    <property type="evidence" value="ECO:0000318"/>
    <property type="project" value="GO_Central"/>
</dbReference>
<dbReference type="GO" id="GO:0031860">
    <property type="term" value="P:telomeric 3' overhang formation"/>
    <property type="evidence" value="ECO:0000266"/>
    <property type="project" value="RGD"/>
</dbReference>
<dbReference type="CDD" id="cd00840">
    <property type="entry name" value="MPP_Mre11_N"/>
    <property type="match status" value="1"/>
</dbReference>
<dbReference type="FunFam" id="3.30.110.110:FF:000001">
    <property type="entry name" value="Double-strand break repair protein"/>
    <property type="match status" value="1"/>
</dbReference>
<dbReference type="FunFam" id="3.60.21.10:FF:000011">
    <property type="entry name" value="Double-strand break repair protein"/>
    <property type="match status" value="1"/>
</dbReference>
<dbReference type="Gene3D" id="3.60.21.10">
    <property type="match status" value="1"/>
</dbReference>
<dbReference type="Gene3D" id="3.30.110.110">
    <property type="entry name" value="Mre11, capping domain"/>
    <property type="match status" value="1"/>
</dbReference>
<dbReference type="InterPro" id="IPR004843">
    <property type="entry name" value="Calcineurin-like_PHP_ApaH"/>
</dbReference>
<dbReference type="InterPro" id="IPR029052">
    <property type="entry name" value="Metallo-depent_PP-like"/>
</dbReference>
<dbReference type="InterPro" id="IPR003701">
    <property type="entry name" value="Mre11"/>
</dbReference>
<dbReference type="InterPro" id="IPR038487">
    <property type="entry name" value="Mre11_capping_dom"/>
</dbReference>
<dbReference type="InterPro" id="IPR007281">
    <property type="entry name" value="Mre11_DNA-bd"/>
</dbReference>
<dbReference type="InterPro" id="IPR041796">
    <property type="entry name" value="Mre11_N"/>
</dbReference>
<dbReference type="NCBIfam" id="TIGR00583">
    <property type="entry name" value="mre11"/>
    <property type="match status" value="1"/>
</dbReference>
<dbReference type="PANTHER" id="PTHR10139">
    <property type="entry name" value="DOUBLE-STRAND BREAK REPAIR PROTEIN MRE11"/>
    <property type="match status" value="1"/>
</dbReference>
<dbReference type="PANTHER" id="PTHR10139:SF1">
    <property type="entry name" value="DOUBLE-STRAND BREAK REPAIR PROTEIN MRE11"/>
    <property type="match status" value="1"/>
</dbReference>
<dbReference type="Pfam" id="PF00149">
    <property type="entry name" value="Metallophos"/>
    <property type="match status" value="1"/>
</dbReference>
<dbReference type="Pfam" id="PF04152">
    <property type="entry name" value="Mre11_DNA_bind"/>
    <property type="match status" value="1"/>
</dbReference>
<dbReference type="PIRSF" id="PIRSF000882">
    <property type="entry name" value="DSB_repair_MRE11"/>
    <property type="match status" value="1"/>
</dbReference>
<dbReference type="SMART" id="SM01347">
    <property type="entry name" value="Mre11_DNA_bind"/>
    <property type="match status" value="1"/>
</dbReference>
<dbReference type="SUPFAM" id="SSF56300">
    <property type="entry name" value="Metallo-dependent phosphatases"/>
    <property type="match status" value="1"/>
</dbReference>